<reference key="1">
    <citation type="journal article" date="1992" name="Virology">
        <title>The correct sequence of the porcine group C/Cowden rotavirus major inner capsid protein shows close homology with human isolates from Brazil and the U.K.</title>
        <authorList>
            <person name="Cooke S.J."/>
            <person name="Clarke I.N."/>
            <person name="Freitas R.B."/>
            <person name="Gabbay Y.B."/>
            <person name="Lambden P.R."/>
        </authorList>
    </citation>
    <scope>NUCLEOTIDE SEQUENCE [GENOMIC RNA]</scope>
</reference>
<reference key="2">
    <citation type="journal article" date="1990" name="Virology">
        <title>Sequence analysis of the gene (6) encoding the major capsid protein (VP6) of group C rotavirus: higher than expected homology to the corresponding protein from group A virus.</title>
        <authorList>
            <person name="Bremont M."/>
            <person name="Chabanne-Vautherot D."/>
            <person name="Vannier P."/>
            <person name="McCrae A.E."/>
            <person name="Cohen J."/>
        </authorList>
    </citation>
    <scope>NUCLEOTIDE SEQUENCE [MRNA]</scope>
</reference>
<feature type="chain" id="PRO_0000149574" description="Intermediate capsid protein VP6">
    <location>
        <begin position="1"/>
        <end position="395"/>
    </location>
</feature>
<feature type="sequence conflict" description="In Ref. 2; AAA47096." evidence="2" ref="2">
    <original>V</original>
    <variation>W</variation>
    <location>
        <position position="348"/>
    </location>
</feature>
<sequence length="395" mass="44665">MDVLFSIAKTVSDLKKKVVVGTIYTNVEDIIQQTNELIRTLNGNTFHTGGIGTQPQKEWNFQLPQLGTTLLNLDDNYVQATRSVIDYLASFIEAVCDDEIVREASRNGMQPQSPTLIALASSKFKTINFNNSSQSIKNWSAQSRRENPVYEYKNPMVFEYRNSYILQRANPQYGNVMGLRYYTASNTCQLAAFDSTLAENAPNNTQRFIYNGRLKRPISNVLMKIEAGAPNINNLTILPDPTNQTTWLYNPDQLMNGTFTIEFYNNGQLVDMVRNMGVVTVRTFDSYRITIDMIRPAAMTQYVQRLFPQGGPYPYQAAYMLTLSILDATTESVLCDSHSVDYSIVANVRRDSAMPAGTVFQPGFPWEQTLSNYTVAQEDNLERLLLVASVKRMVM</sequence>
<comment type="function">
    <text evidence="1">Intermediate capsid protein that self assembles to form an icosahedral capsid with a T=13 symmetry, which consists of 230 trimers of VP6, with channels at each of its five-fold vertices. This capsid constitutes the middle concentric layer of the viral mature particle. The innermost VP2 capsid and the intermediate VP6 capsid remain intact following cell entry to protect the dsRNA from degradation and to prevent unfavorable antiviral responses in the host cell during all the replication cycle of the virus. Nascent transcripts are transcribed within the structural confines of this double-layered particle (DLP) and are extruded through the channels at the five-fold axes. VP6 is required for the transcription activity of the DLP.</text>
</comment>
<comment type="subunit">
    <text evidence="1">Homotrimer. Interacts with the inner capsid protein VP2. Interacts with the outer capsid glycoprotein VP7.</text>
</comment>
<comment type="subcellular location">
    <subcellularLocation>
        <location evidence="1">Virion</location>
    </subcellularLocation>
    <text evidence="1">Component of the intermediate capsid. Also found in spherical cytoplasmic structures, called virus factories, that appear early after infection and are the site of viral replication and packaging.</text>
</comment>
<comment type="similarity">
    <text evidence="1">Belongs to the rotavirus VP6 family.</text>
</comment>
<comment type="sequence caution" evidence="2">
    <conflict type="frameshift">
        <sequence resource="EMBL-CDS" id="AAA47096"/>
    </conflict>
</comment>
<protein>
    <recommendedName>
        <fullName evidence="1">Intermediate capsid protein VP6</fullName>
    </recommendedName>
</protein>
<keyword id="KW-0167">Capsid protein</keyword>
<keyword id="KW-1154">Intermediate capsid protein</keyword>
<keyword id="KW-0946">Virion</keyword>
<evidence type="ECO:0000255" key="1">
    <source>
        <dbReference type="HAMAP-Rule" id="MF_04126"/>
    </source>
</evidence>
<evidence type="ECO:0000305" key="2"/>
<organism>
    <name type="scientific">Rotavirus C (strain RVC/Pig/United States/Cowden/1980)</name>
    <name type="common">RV-C</name>
    <dbReference type="NCBI Taxonomy" id="10916"/>
    <lineage>
        <taxon>Viruses</taxon>
        <taxon>Riboviria</taxon>
        <taxon>Orthornavirae</taxon>
        <taxon>Duplornaviricota</taxon>
        <taxon>Resentoviricetes</taxon>
        <taxon>Reovirales</taxon>
        <taxon>Sedoreoviridae</taxon>
        <taxon>Rotavirus</taxon>
        <taxon>Rotavirus C</taxon>
    </lineage>
</organism>
<accession>P14162</accession>
<dbReference type="EMBL" id="M94157">
    <property type="protein sequence ID" value="AAA47097.1"/>
    <property type="molecule type" value="Genomic_RNA"/>
</dbReference>
<dbReference type="EMBL" id="M29287">
    <property type="protein sequence ID" value="AAA47096.1"/>
    <property type="status" value="ALT_FRAME"/>
    <property type="molecule type" value="mRNA"/>
</dbReference>
<dbReference type="PIR" id="A36216">
    <property type="entry name" value="VPXRPR"/>
</dbReference>
<dbReference type="SMR" id="P14162"/>
<dbReference type="Proteomes" id="UP000008175">
    <property type="component" value="Genome"/>
</dbReference>
<dbReference type="GO" id="GO:0019031">
    <property type="term" value="C:viral envelope"/>
    <property type="evidence" value="ECO:0007669"/>
    <property type="project" value="UniProtKB-UniRule"/>
</dbReference>
<dbReference type="GO" id="GO:0039626">
    <property type="term" value="C:viral intermediate capsid"/>
    <property type="evidence" value="ECO:0007669"/>
    <property type="project" value="UniProtKB-UniRule"/>
</dbReference>
<dbReference type="GO" id="GO:0046789">
    <property type="term" value="F:host cell surface receptor binding"/>
    <property type="evidence" value="ECO:0007669"/>
    <property type="project" value="UniProtKB-UniRule"/>
</dbReference>
<dbReference type="GO" id="GO:0005198">
    <property type="term" value="F:structural molecule activity"/>
    <property type="evidence" value="ECO:0007669"/>
    <property type="project" value="UniProtKB-UniRule"/>
</dbReference>
<dbReference type="GO" id="GO:0019064">
    <property type="term" value="P:fusion of virus membrane with host plasma membrane"/>
    <property type="evidence" value="ECO:0007669"/>
    <property type="project" value="UniProtKB-UniRule"/>
</dbReference>
<dbReference type="Gene3D" id="2.60.120.170">
    <property type="match status" value="1"/>
</dbReference>
<dbReference type="Gene3D" id="1.10.1350.10">
    <property type="entry name" value="Viral capsid alpha domain"/>
    <property type="match status" value="1"/>
</dbReference>
<dbReference type="HAMAP" id="MF_04126">
    <property type="entry name" value="Rota_VP6"/>
    <property type="match status" value="1"/>
</dbReference>
<dbReference type="InterPro" id="IPR008980">
    <property type="entry name" value="Capsid_hemagglutn"/>
</dbReference>
<dbReference type="InterPro" id="IPR001385">
    <property type="entry name" value="Rotavirus_A/C_VP6"/>
</dbReference>
<dbReference type="InterPro" id="IPR008935">
    <property type="entry name" value="Virus_capsid_a-hlx_vir"/>
</dbReference>
<dbReference type="Pfam" id="PF00980">
    <property type="entry name" value="Rota_Capsid_VP6"/>
    <property type="match status" value="1"/>
</dbReference>
<dbReference type="SUPFAM" id="SSF48345">
    <property type="entry name" value="A virus capsid protein alpha-helical domain"/>
    <property type="match status" value="1"/>
</dbReference>
<dbReference type="SUPFAM" id="SSF49818">
    <property type="entry name" value="Viral protein domain"/>
    <property type="match status" value="1"/>
</dbReference>
<organismHost>
    <name type="scientific">Sus scrofa</name>
    <name type="common">Pig</name>
    <dbReference type="NCBI Taxonomy" id="9823"/>
</organismHost>
<name>VP6_ROTPC</name>
<proteinExistence type="evidence at transcript level"/>